<keyword id="KW-1003">Cell membrane</keyword>
<keyword id="KW-0472">Membrane</keyword>
<keyword id="KW-1185">Reference proteome</keyword>
<keyword id="KW-0808">Transferase</keyword>
<keyword id="KW-0812">Transmembrane</keyword>
<keyword id="KW-1133">Transmembrane helix</keyword>
<feature type="chain" id="PRO_0000172618" description="Phosphatidylglycerol--prolipoprotein diacylglyceryl transferase">
    <location>
        <begin position="1"/>
        <end position="261"/>
    </location>
</feature>
<feature type="transmembrane region" description="Helical" evidence="1">
    <location>
        <begin position="20"/>
        <end position="40"/>
    </location>
</feature>
<feature type="transmembrane region" description="Helical" evidence="1">
    <location>
        <begin position="54"/>
        <end position="74"/>
    </location>
</feature>
<feature type="transmembrane region" description="Helical" evidence="1">
    <location>
        <begin position="94"/>
        <end position="114"/>
    </location>
</feature>
<feature type="transmembrane region" description="Helical" evidence="1">
    <location>
        <begin position="175"/>
        <end position="195"/>
    </location>
</feature>
<feature type="transmembrane region" description="Helical" evidence="1">
    <location>
        <begin position="205"/>
        <end position="225"/>
    </location>
</feature>
<feature type="transmembrane region" description="Helical" evidence="1">
    <location>
        <begin position="235"/>
        <end position="255"/>
    </location>
</feature>
<feature type="binding site" evidence="1">
    <location>
        <position position="139"/>
    </location>
    <ligand>
        <name>a 1,2-diacyl-sn-glycero-3-phospho-(1'-sn-glycerol)</name>
        <dbReference type="ChEBI" id="CHEBI:64716"/>
    </ligand>
</feature>
<protein>
    <recommendedName>
        <fullName evidence="1">Phosphatidylglycerol--prolipoprotein diacylglyceryl transferase</fullName>
        <ecNumber evidence="1">2.5.1.145</ecNumber>
    </recommendedName>
</protein>
<accession>Q9CHU9</accession>
<name>LGT_LACLA</name>
<organism>
    <name type="scientific">Lactococcus lactis subsp. lactis (strain IL1403)</name>
    <name type="common">Streptococcus lactis</name>
    <dbReference type="NCBI Taxonomy" id="272623"/>
    <lineage>
        <taxon>Bacteria</taxon>
        <taxon>Bacillati</taxon>
        <taxon>Bacillota</taxon>
        <taxon>Bacilli</taxon>
        <taxon>Lactobacillales</taxon>
        <taxon>Streptococcaceae</taxon>
        <taxon>Lactococcus</taxon>
    </lineage>
</organism>
<comment type="function">
    <text evidence="1">Catalyzes the transfer of the diacylglyceryl group from phosphatidylglycerol to the sulfhydryl group of the N-terminal cysteine of a prolipoprotein, the first step in the formation of mature lipoproteins.</text>
</comment>
<comment type="catalytic activity">
    <reaction evidence="1">
        <text>L-cysteinyl-[prolipoprotein] + a 1,2-diacyl-sn-glycero-3-phospho-(1'-sn-glycerol) = an S-1,2-diacyl-sn-glyceryl-L-cysteinyl-[prolipoprotein] + sn-glycerol 1-phosphate + H(+)</text>
        <dbReference type="Rhea" id="RHEA:56712"/>
        <dbReference type="Rhea" id="RHEA-COMP:14679"/>
        <dbReference type="Rhea" id="RHEA-COMP:14680"/>
        <dbReference type="ChEBI" id="CHEBI:15378"/>
        <dbReference type="ChEBI" id="CHEBI:29950"/>
        <dbReference type="ChEBI" id="CHEBI:57685"/>
        <dbReference type="ChEBI" id="CHEBI:64716"/>
        <dbReference type="ChEBI" id="CHEBI:140658"/>
        <dbReference type="EC" id="2.5.1.145"/>
    </reaction>
</comment>
<comment type="pathway">
    <text evidence="1">Protein modification; lipoprotein biosynthesis (diacylglyceryl transfer).</text>
</comment>
<comment type="subcellular location">
    <subcellularLocation>
        <location evidence="1">Cell membrane</location>
        <topology evidence="1">Multi-pass membrane protein</topology>
    </subcellularLocation>
</comment>
<comment type="similarity">
    <text evidence="1">Belongs to the Lgt family.</text>
</comment>
<gene>
    <name evidence="1" type="primary">lgt</name>
    <name type="ordered locus">LL0619</name>
    <name type="ORF">L5776</name>
</gene>
<sequence>MNNLFPFLALNKIALQLGPLAIHWYAIFIVGGAALAVWLACKEAPKRNIKTDDIIDFVLFAFPLGIVGARLYYVIFQWSYYSQHPSQIIAMWDGGGAIYGSLIAGAIVLFVFSYYRMIHPLDLLDITIPGVFLAQAMGRWGNFVNQEAYGKIVSNLDWLPAFIRNQMFIDGHYRMPTFLFESIGTLSGFILVMVFRHRIKGLKRGDIFSFYLVWYGAVRFIVEGMRTDSLMLGPARVSQWLSVLLVIVGLVLFIYRRMKKN</sequence>
<dbReference type="EC" id="2.5.1.145" evidence="1"/>
<dbReference type="EMBL" id="AE005176">
    <property type="protein sequence ID" value="AAK04717.1"/>
    <property type="molecule type" value="Genomic_DNA"/>
</dbReference>
<dbReference type="PIR" id="C86702">
    <property type="entry name" value="C86702"/>
</dbReference>
<dbReference type="RefSeq" id="NP_266775.1">
    <property type="nucleotide sequence ID" value="NC_002662.1"/>
</dbReference>
<dbReference type="RefSeq" id="WP_003129530.1">
    <property type="nucleotide sequence ID" value="NC_002662.1"/>
</dbReference>
<dbReference type="SMR" id="Q9CHU9"/>
<dbReference type="PaxDb" id="272623-L5776"/>
<dbReference type="EnsemblBacteria" id="AAK04717">
    <property type="protein sequence ID" value="AAK04717"/>
    <property type="gene ID" value="L5776"/>
</dbReference>
<dbReference type="KEGG" id="lla:L5776"/>
<dbReference type="PATRIC" id="fig|272623.7.peg.661"/>
<dbReference type="eggNOG" id="COG0682">
    <property type="taxonomic scope" value="Bacteria"/>
</dbReference>
<dbReference type="HOGENOM" id="CLU_013386_0_1_9"/>
<dbReference type="OrthoDB" id="871140at2"/>
<dbReference type="UniPathway" id="UPA00664"/>
<dbReference type="Proteomes" id="UP000002196">
    <property type="component" value="Chromosome"/>
</dbReference>
<dbReference type="GO" id="GO:0005886">
    <property type="term" value="C:plasma membrane"/>
    <property type="evidence" value="ECO:0007669"/>
    <property type="project" value="UniProtKB-SubCell"/>
</dbReference>
<dbReference type="GO" id="GO:0008961">
    <property type="term" value="F:phosphatidylglycerol-prolipoprotein diacylglyceryl transferase activity"/>
    <property type="evidence" value="ECO:0007669"/>
    <property type="project" value="UniProtKB-UniRule"/>
</dbReference>
<dbReference type="GO" id="GO:0042158">
    <property type="term" value="P:lipoprotein biosynthetic process"/>
    <property type="evidence" value="ECO:0007669"/>
    <property type="project" value="UniProtKB-UniRule"/>
</dbReference>
<dbReference type="HAMAP" id="MF_01147">
    <property type="entry name" value="Lgt"/>
    <property type="match status" value="1"/>
</dbReference>
<dbReference type="InterPro" id="IPR001640">
    <property type="entry name" value="Lgt"/>
</dbReference>
<dbReference type="NCBIfam" id="TIGR00544">
    <property type="entry name" value="lgt"/>
    <property type="match status" value="1"/>
</dbReference>
<dbReference type="PANTHER" id="PTHR30589:SF0">
    <property type="entry name" value="PHOSPHATIDYLGLYCEROL--PROLIPOPROTEIN DIACYLGLYCERYL TRANSFERASE"/>
    <property type="match status" value="1"/>
</dbReference>
<dbReference type="PANTHER" id="PTHR30589">
    <property type="entry name" value="PROLIPOPROTEIN DIACYLGLYCERYL TRANSFERASE"/>
    <property type="match status" value="1"/>
</dbReference>
<dbReference type="Pfam" id="PF01790">
    <property type="entry name" value="LGT"/>
    <property type="match status" value="1"/>
</dbReference>
<dbReference type="PROSITE" id="PS01311">
    <property type="entry name" value="LGT"/>
    <property type="match status" value="1"/>
</dbReference>
<evidence type="ECO:0000255" key="1">
    <source>
        <dbReference type="HAMAP-Rule" id="MF_01147"/>
    </source>
</evidence>
<reference key="1">
    <citation type="journal article" date="2001" name="Genome Res.">
        <title>The complete genome sequence of the lactic acid bacterium Lactococcus lactis ssp. lactis IL1403.</title>
        <authorList>
            <person name="Bolotin A."/>
            <person name="Wincker P."/>
            <person name="Mauger S."/>
            <person name="Jaillon O."/>
            <person name="Malarme K."/>
            <person name="Weissenbach J."/>
            <person name="Ehrlich S.D."/>
            <person name="Sorokin A."/>
        </authorList>
    </citation>
    <scope>NUCLEOTIDE SEQUENCE [LARGE SCALE GENOMIC DNA]</scope>
    <source>
        <strain>IL1403</strain>
    </source>
</reference>
<proteinExistence type="inferred from homology"/>